<protein>
    <recommendedName>
        <fullName evidence="1">Iron-sulfur cluster repair protein YtfE</fullName>
    </recommendedName>
</protein>
<sequence length="220" mass="24883">MAYRDQPLGELALSIPRASALFRKYDMDYCCGGKQTLARAAARKELDVEVIEAELAKLAEQPIEKDWRSAPLAEIIDHIIVRYHDRHREQLPELILQATKVERVHADKPSVPKGLTKYLTMLHEELSSHMMKEEQILFPMIKQGMGSQAMGPISVMESEHDEAGELLEVIKHTTNNVTPPPEACTTWKAMYNGINELIDDLMDHISLENNVLFPRALAGE</sequence>
<evidence type="ECO:0000255" key="1">
    <source>
        <dbReference type="HAMAP-Rule" id="MF_01606"/>
    </source>
</evidence>
<comment type="function">
    <text evidence="1">Di-iron-containing protein involved in the repair of iron-sulfur clusters damaged by oxidative and nitrosative stress conditions.</text>
</comment>
<comment type="subunit">
    <text evidence="1">Homodimer.</text>
</comment>
<comment type="subcellular location">
    <subcellularLocation>
        <location evidence="1">Cytoplasm</location>
    </subcellularLocation>
</comment>
<comment type="similarity">
    <text evidence="1">Belongs to the RIC family. YtfE subfamily.</text>
</comment>
<organism>
    <name type="scientific">Escherichia coli (strain K12 / MC4100 / BW2952)</name>
    <dbReference type="NCBI Taxonomy" id="595496"/>
    <lineage>
        <taxon>Bacteria</taxon>
        <taxon>Pseudomonadati</taxon>
        <taxon>Pseudomonadota</taxon>
        <taxon>Gammaproteobacteria</taxon>
        <taxon>Enterobacterales</taxon>
        <taxon>Enterobacteriaceae</taxon>
        <taxon>Escherichia</taxon>
    </lineage>
</organism>
<gene>
    <name evidence="1" type="primary">ytfE</name>
    <name type="ordered locus">BWG_3920</name>
</gene>
<proteinExistence type="inferred from homology"/>
<reference key="1">
    <citation type="journal article" date="2009" name="J. Bacteriol.">
        <title>Genomic sequencing reveals regulatory mutations and recombinational events in the widely used MC4100 lineage of Escherichia coli K-12.</title>
        <authorList>
            <person name="Ferenci T."/>
            <person name="Zhou Z."/>
            <person name="Betteridge T."/>
            <person name="Ren Y."/>
            <person name="Liu Y."/>
            <person name="Feng L."/>
            <person name="Reeves P.R."/>
            <person name="Wang L."/>
        </authorList>
    </citation>
    <scope>NUCLEOTIDE SEQUENCE [LARGE SCALE GENOMIC DNA]</scope>
    <source>
        <strain>K12 / MC4100 / BW2952</strain>
    </source>
</reference>
<feature type="chain" id="PRO_1000215699" description="Iron-sulfur cluster repair protein YtfE">
    <location>
        <begin position="1"/>
        <end position="220"/>
    </location>
</feature>
<dbReference type="EMBL" id="CP001396">
    <property type="protein sequence ID" value="ACR65071.1"/>
    <property type="molecule type" value="Genomic_DNA"/>
</dbReference>
<dbReference type="RefSeq" id="WP_000331456.1">
    <property type="nucleotide sequence ID" value="NC_012759.1"/>
</dbReference>
<dbReference type="SMR" id="C4ZR85"/>
<dbReference type="GeneID" id="93777612"/>
<dbReference type="KEGG" id="ebw:BWG_3920"/>
<dbReference type="HOGENOM" id="CLU_076075_2_0_6"/>
<dbReference type="GO" id="GO:0005737">
    <property type="term" value="C:cytoplasm"/>
    <property type="evidence" value="ECO:0007669"/>
    <property type="project" value="UniProtKB-SubCell"/>
</dbReference>
<dbReference type="GO" id="GO:0046872">
    <property type="term" value="F:metal ion binding"/>
    <property type="evidence" value="ECO:0007669"/>
    <property type="project" value="UniProtKB-KW"/>
</dbReference>
<dbReference type="GO" id="GO:0030091">
    <property type="term" value="P:protein repair"/>
    <property type="evidence" value="ECO:0007669"/>
    <property type="project" value="UniProtKB-UniRule"/>
</dbReference>
<dbReference type="GO" id="GO:0051409">
    <property type="term" value="P:response to nitrosative stress"/>
    <property type="evidence" value="ECO:0007669"/>
    <property type="project" value="UniProtKB-UniRule"/>
</dbReference>
<dbReference type="GO" id="GO:0006979">
    <property type="term" value="P:response to oxidative stress"/>
    <property type="evidence" value="ECO:0007669"/>
    <property type="project" value="UniProtKB-UniRule"/>
</dbReference>
<dbReference type="CDD" id="cd12108">
    <property type="entry name" value="Hr-like"/>
    <property type="match status" value="1"/>
</dbReference>
<dbReference type="FunFam" id="1.20.120.520:FF:000001">
    <property type="entry name" value="Iron-sulfur cluster repair protein YtfE"/>
    <property type="match status" value="1"/>
</dbReference>
<dbReference type="Gene3D" id="1.20.120.520">
    <property type="entry name" value="nmb1532 protein domain like"/>
    <property type="match status" value="1"/>
</dbReference>
<dbReference type="HAMAP" id="MF_01606">
    <property type="entry name" value="RIC_YtfE"/>
    <property type="match status" value="1"/>
</dbReference>
<dbReference type="InterPro" id="IPR023742">
    <property type="entry name" value="FeS-repair_YftE"/>
</dbReference>
<dbReference type="InterPro" id="IPR012312">
    <property type="entry name" value="Hemerythrin-like"/>
</dbReference>
<dbReference type="InterPro" id="IPR019903">
    <property type="entry name" value="RIC_family"/>
</dbReference>
<dbReference type="NCBIfam" id="TIGR03652">
    <property type="entry name" value="FeS_repair_RIC"/>
    <property type="match status" value="1"/>
</dbReference>
<dbReference type="NCBIfam" id="NF008221">
    <property type="entry name" value="PRK10992.1"/>
    <property type="match status" value="1"/>
</dbReference>
<dbReference type="PANTHER" id="PTHR36438">
    <property type="entry name" value="IRON-SULFUR CLUSTER REPAIR PROTEIN YTFE"/>
    <property type="match status" value="1"/>
</dbReference>
<dbReference type="PANTHER" id="PTHR36438:SF1">
    <property type="entry name" value="IRON-SULFUR CLUSTER REPAIR PROTEIN YTFE"/>
    <property type="match status" value="1"/>
</dbReference>
<dbReference type="Pfam" id="PF01814">
    <property type="entry name" value="Hemerythrin"/>
    <property type="match status" value="1"/>
</dbReference>
<dbReference type="Pfam" id="PF04405">
    <property type="entry name" value="ScdA_N"/>
    <property type="match status" value="1"/>
</dbReference>
<accession>C4ZR85</accession>
<keyword id="KW-0963">Cytoplasm</keyword>
<keyword id="KW-0408">Iron</keyword>
<keyword id="KW-0479">Metal-binding</keyword>
<keyword id="KW-0346">Stress response</keyword>
<name>YTFE_ECOBW</name>